<dbReference type="EMBL" id="CP000678">
    <property type="protein sequence ID" value="ABQ86836.1"/>
    <property type="molecule type" value="Genomic_DNA"/>
</dbReference>
<dbReference type="RefSeq" id="WP_004032383.1">
    <property type="nucleotide sequence ID" value="NZ_CP117965.1"/>
</dbReference>
<dbReference type="SMR" id="A5UKV8"/>
<dbReference type="STRING" id="420247.Msm_0631"/>
<dbReference type="EnsemblBacteria" id="ABQ86836">
    <property type="protein sequence ID" value="ABQ86836"/>
    <property type="gene ID" value="Msm_0631"/>
</dbReference>
<dbReference type="GeneID" id="78817258"/>
<dbReference type="KEGG" id="msi:Msm_0631"/>
<dbReference type="PATRIC" id="fig|420247.28.peg.628"/>
<dbReference type="eggNOG" id="arCOG04270">
    <property type="taxonomic scope" value="Archaea"/>
</dbReference>
<dbReference type="HOGENOM" id="CLU_100097_0_0_2"/>
<dbReference type="Proteomes" id="UP000001992">
    <property type="component" value="Chromosome"/>
</dbReference>
<dbReference type="GO" id="GO:0003677">
    <property type="term" value="F:DNA binding"/>
    <property type="evidence" value="ECO:0007669"/>
    <property type="project" value="UniProtKB-KW"/>
</dbReference>
<dbReference type="GO" id="GO:0006355">
    <property type="term" value="P:regulation of DNA-templated transcription"/>
    <property type="evidence" value="ECO:0007669"/>
    <property type="project" value="InterPro"/>
</dbReference>
<dbReference type="GO" id="GO:0006367">
    <property type="term" value="P:transcription initiation at RNA polymerase II promoter"/>
    <property type="evidence" value="ECO:0007669"/>
    <property type="project" value="InterPro"/>
</dbReference>
<dbReference type="Gene3D" id="1.10.10.10">
    <property type="entry name" value="Winged helix-like DNA-binding domain superfamily/Winged helix DNA-binding domain"/>
    <property type="match status" value="1"/>
</dbReference>
<dbReference type="HAMAP" id="MF_01909">
    <property type="entry name" value="TFE_arch"/>
    <property type="match status" value="1"/>
</dbReference>
<dbReference type="InterPro" id="IPR016481">
    <property type="entry name" value="TF_E_archaea"/>
</dbReference>
<dbReference type="InterPro" id="IPR039997">
    <property type="entry name" value="TFE"/>
</dbReference>
<dbReference type="InterPro" id="IPR017919">
    <property type="entry name" value="TFIIE/TFIIEa_HTH"/>
</dbReference>
<dbReference type="InterPro" id="IPR002853">
    <property type="entry name" value="TFIIE_asu"/>
</dbReference>
<dbReference type="InterPro" id="IPR024550">
    <property type="entry name" value="TFIIEa/SarR/Rpc3_HTH_dom"/>
</dbReference>
<dbReference type="InterPro" id="IPR036388">
    <property type="entry name" value="WH-like_DNA-bd_sf"/>
</dbReference>
<dbReference type="InterPro" id="IPR036390">
    <property type="entry name" value="WH_DNA-bd_sf"/>
</dbReference>
<dbReference type="NCBIfam" id="NF004910">
    <property type="entry name" value="PRK06266.1"/>
    <property type="match status" value="1"/>
</dbReference>
<dbReference type="NCBIfam" id="TIGR00373">
    <property type="entry name" value="transcription factor E"/>
    <property type="match status" value="1"/>
</dbReference>
<dbReference type="PANTHER" id="PTHR13097:SF7">
    <property type="entry name" value="GENERAL TRANSCRIPTION FACTOR IIE SUBUNIT 1"/>
    <property type="match status" value="1"/>
</dbReference>
<dbReference type="PANTHER" id="PTHR13097">
    <property type="entry name" value="TRANSCRIPTION INITIATION FACTOR IIE, ALPHA SUBUNIT"/>
    <property type="match status" value="1"/>
</dbReference>
<dbReference type="Pfam" id="PF02002">
    <property type="entry name" value="TFIIE_alpha"/>
    <property type="match status" value="1"/>
</dbReference>
<dbReference type="PIRSF" id="PIRSF006373">
    <property type="entry name" value="TF_E_archaea"/>
    <property type="match status" value="1"/>
</dbReference>
<dbReference type="SMART" id="SM00531">
    <property type="entry name" value="TFIIE"/>
    <property type="match status" value="1"/>
</dbReference>
<dbReference type="SUPFAM" id="SSF46785">
    <property type="entry name" value="Winged helix' DNA-binding domain"/>
    <property type="match status" value="1"/>
</dbReference>
<dbReference type="PROSITE" id="PS51344">
    <property type="entry name" value="HTH_TFE_IIE"/>
    <property type="match status" value="1"/>
</dbReference>
<proteinExistence type="inferred from homology"/>
<comment type="function">
    <text evidence="1">Transcription factor that plays a role in the activation of archaeal genes transcribed by RNA polymerase. Facilitates transcription initiation by enhancing TATA-box recognition by TATA-box-binding protein (Tbp), and transcription factor B (Tfb) and RNA polymerase recruitment. Not absolutely required for transcription in vitro, but particularly important in cases where Tbp or Tfb function is not optimal. It dynamically alters the nucleic acid-binding properties of RNA polymerases by stabilizing the initiation complex and destabilizing elongation complexes. Seems to translocate with the RNA polymerase following initiation and acts by binding to the non template strand of the transcription bubble in elongation complexes.</text>
</comment>
<comment type="subunit">
    <text evidence="1">Monomer. Interaction with RNA polymerase subunits RpoF and RpoE is necessary for Tfe stimulatory transcription activity. Able to interact with Tbp and RNA polymerase in the absence of DNA promoter. Interacts both with the preinitiation and elongation complexes.</text>
</comment>
<comment type="domain">
    <text evidence="1">The winged helix domain is involved in binding to DNA in the preinitiation complex.</text>
</comment>
<comment type="similarity">
    <text evidence="1">Belongs to the TFE family.</text>
</comment>
<evidence type="ECO:0000255" key="1">
    <source>
        <dbReference type="HAMAP-Rule" id="MF_01909"/>
    </source>
</evidence>
<protein>
    <recommendedName>
        <fullName evidence="1">Transcription factor E</fullName>
        <shortName evidence="1">TFE</shortName>
    </recommendedName>
    <alternativeName>
        <fullName evidence="1">TFIIE subunit alpha homolog</fullName>
    </alternativeName>
    <alternativeName>
        <fullName evidence="1">Transcription initiation factor TFIIE</fullName>
    </alternativeName>
</protein>
<accession>A5UKV8</accession>
<reference key="1">
    <citation type="journal article" date="2007" name="Proc. Natl. Acad. Sci. U.S.A.">
        <title>Genomic and metabolic adaptations of Methanobrevibacter smithii to the human gut.</title>
        <authorList>
            <person name="Samuel B.S."/>
            <person name="Hansen E.E."/>
            <person name="Manchester J.K."/>
            <person name="Coutinho P.M."/>
            <person name="Henrissat B."/>
            <person name="Fulton R."/>
            <person name="Latreille P."/>
            <person name="Kim K."/>
            <person name="Wilson R.K."/>
            <person name="Gordon J.I."/>
        </authorList>
    </citation>
    <scope>NUCLEOTIDE SEQUENCE [LARGE SCALE GENOMIC DNA]</scope>
    <source>
        <strain>ATCC 35061 / DSM 861 / OCM 144 / PS</strain>
    </source>
</reference>
<sequence length="173" mass="20330">MIDDPLVKSLLTNVVEDESNLPIVQALIDGVETDEAIAEKTEIKLNIVRKILYKLYDMGLATYKRSKDPETQWFTYSWKFEEQEVINHIKSDSEEYLKMLNKELEKEEDTMYFVCPQGHIRLDFETATEYDFICPECGEELEFFDNTNLIKQIKDDIKTVESNYKSFTKKVDA</sequence>
<organism>
    <name type="scientific">Methanobrevibacter smithii (strain ATCC 35061 / DSM 861 / OCM 144 / PS)</name>
    <dbReference type="NCBI Taxonomy" id="420247"/>
    <lineage>
        <taxon>Archaea</taxon>
        <taxon>Methanobacteriati</taxon>
        <taxon>Methanobacteriota</taxon>
        <taxon>Methanomada group</taxon>
        <taxon>Methanobacteria</taxon>
        <taxon>Methanobacteriales</taxon>
        <taxon>Methanobacteriaceae</taxon>
        <taxon>Methanobrevibacter</taxon>
    </lineage>
</organism>
<name>TFE_METS3</name>
<gene>
    <name evidence="1" type="primary">tfe</name>
    <name type="ordered locus">Msm_0631</name>
</gene>
<keyword id="KW-0238">DNA-binding</keyword>
<keyword id="KW-0804">Transcription</keyword>
<keyword id="KW-0805">Transcription regulation</keyword>
<feature type="chain" id="PRO_0000326596" description="Transcription factor E">
    <location>
        <begin position="1"/>
        <end position="173"/>
    </location>
</feature>
<feature type="domain" description="HTH TFE/IIEalpha-type" evidence="1">
    <location>
        <begin position="3"/>
        <end position="86"/>
    </location>
</feature>